<accession>Q9C8Y2</accession>
<proteinExistence type="inferred from homology"/>
<reference key="1">
    <citation type="journal article" date="2000" name="Nature">
        <title>Sequence and analysis of chromosome 1 of the plant Arabidopsis thaliana.</title>
        <authorList>
            <person name="Theologis A."/>
            <person name="Ecker J.R."/>
            <person name="Palm C.J."/>
            <person name="Federspiel N.A."/>
            <person name="Kaul S."/>
            <person name="White O."/>
            <person name="Alonso J."/>
            <person name="Altafi H."/>
            <person name="Araujo R."/>
            <person name="Bowman C.L."/>
            <person name="Brooks S.Y."/>
            <person name="Buehler E."/>
            <person name="Chan A."/>
            <person name="Chao Q."/>
            <person name="Chen H."/>
            <person name="Cheuk R.F."/>
            <person name="Chin C.W."/>
            <person name="Chung M.K."/>
            <person name="Conn L."/>
            <person name="Conway A.B."/>
            <person name="Conway A.R."/>
            <person name="Creasy T.H."/>
            <person name="Dewar K."/>
            <person name="Dunn P."/>
            <person name="Etgu P."/>
            <person name="Feldblyum T.V."/>
            <person name="Feng J.-D."/>
            <person name="Fong B."/>
            <person name="Fujii C.Y."/>
            <person name="Gill J.E."/>
            <person name="Goldsmith A.D."/>
            <person name="Haas B."/>
            <person name="Hansen N.F."/>
            <person name="Hughes B."/>
            <person name="Huizar L."/>
            <person name="Hunter J.L."/>
            <person name="Jenkins J."/>
            <person name="Johnson-Hopson C."/>
            <person name="Khan S."/>
            <person name="Khaykin E."/>
            <person name="Kim C.J."/>
            <person name="Koo H.L."/>
            <person name="Kremenetskaia I."/>
            <person name="Kurtz D.B."/>
            <person name="Kwan A."/>
            <person name="Lam B."/>
            <person name="Langin-Hooper S."/>
            <person name="Lee A."/>
            <person name="Lee J.M."/>
            <person name="Lenz C.A."/>
            <person name="Li J.H."/>
            <person name="Li Y.-P."/>
            <person name="Lin X."/>
            <person name="Liu S.X."/>
            <person name="Liu Z.A."/>
            <person name="Luros J.S."/>
            <person name="Maiti R."/>
            <person name="Marziali A."/>
            <person name="Militscher J."/>
            <person name="Miranda M."/>
            <person name="Nguyen M."/>
            <person name="Nierman W.C."/>
            <person name="Osborne B.I."/>
            <person name="Pai G."/>
            <person name="Peterson J."/>
            <person name="Pham P.K."/>
            <person name="Rizzo M."/>
            <person name="Rooney T."/>
            <person name="Rowley D."/>
            <person name="Sakano H."/>
            <person name="Salzberg S.L."/>
            <person name="Schwartz J.R."/>
            <person name="Shinn P."/>
            <person name="Southwick A.M."/>
            <person name="Sun H."/>
            <person name="Tallon L.J."/>
            <person name="Tambunga G."/>
            <person name="Toriumi M.J."/>
            <person name="Town C.D."/>
            <person name="Utterback T."/>
            <person name="Van Aken S."/>
            <person name="Vaysberg M."/>
            <person name="Vysotskaia V.S."/>
            <person name="Walker M."/>
            <person name="Wu D."/>
            <person name="Yu G."/>
            <person name="Fraser C.M."/>
            <person name="Venter J.C."/>
            <person name="Davis R.W."/>
        </authorList>
    </citation>
    <scope>NUCLEOTIDE SEQUENCE [LARGE SCALE GENOMIC DNA]</scope>
    <source>
        <strain>cv. Columbia</strain>
    </source>
</reference>
<reference key="2">
    <citation type="journal article" date="2017" name="Plant J.">
        <title>Araport11: a complete reannotation of the Arabidopsis thaliana reference genome.</title>
        <authorList>
            <person name="Cheng C.Y."/>
            <person name="Krishnakumar V."/>
            <person name="Chan A.P."/>
            <person name="Thibaud-Nissen F."/>
            <person name="Schobel S."/>
            <person name="Town C.D."/>
        </authorList>
    </citation>
    <scope>GENOME REANNOTATION</scope>
    <source>
        <strain>cv. Columbia</strain>
    </source>
</reference>
<reference key="3">
    <citation type="journal article" date="2014" name="Plant Cell">
        <title>C2-domain abscisic acid-related proteins mediate the interaction of PYR/PYL/RCAR abscisic acid receptors with the plasma membrane and regulate abscisic acid sensitivity in Arabidopsis.</title>
        <authorList>
            <person name="Rodriguez L."/>
            <person name="Gonzalez-Guzman M."/>
            <person name="Diaz M."/>
            <person name="Rodrigues A."/>
            <person name="Izquierdo-Garcia A.C."/>
            <person name="Peirats-Llobet M."/>
            <person name="Fernandez M.A."/>
            <person name="Antoni R."/>
            <person name="Fernandez D."/>
            <person name="Marquez J.A."/>
            <person name="Mulet J.M."/>
            <person name="Albert A."/>
            <person name="Rodriguez P.L."/>
        </authorList>
    </citation>
    <scope>GENE FAMILY</scope>
    <scope>NOMENCLATURE</scope>
</reference>
<protein>
    <recommendedName>
        <fullName evidence="5">Protein C2-DOMAIN ABA-RELATED 2</fullName>
    </recommendedName>
</protein>
<keyword id="KW-0938">Abscisic acid signaling pathway</keyword>
<keyword id="KW-0007">Acetylation</keyword>
<keyword id="KW-0106">Calcium</keyword>
<keyword id="KW-1003">Cell membrane</keyword>
<keyword id="KW-0343">GTPase activation</keyword>
<keyword id="KW-0446">Lipid-binding</keyword>
<keyword id="KW-0472">Membrane</keyword>
<keyword id="KW-0479">Metal-binding</keyword>
<keyword id="KW-0539">Nucleus</keyword>
<keyword id="KW-1185">Reference proteome</keyword>
<organism evidence="9">
    <name type="scientific">Arabidopsis thaliana</name>
    <name type="common">Mouse-ear cress</name>
    <dbReference type="NCBI Taxonomy" id="3702"/>
    <lineage>
        <taxon>Eukaryota</taxon>
        <taxon>Viridiplantae</taxon>
        <taxon>Streptophyta</taxon>
        <taxon>Embryophyta</taxon>
        <taxon>Tracheophyta</taxon>
        <taxon>Spermatophyta</taxon>
        <taxon>Magnoliopsida</taxon>
        <taxon>eudicotyledons</taxon>
        <taxon>Gunneridae</taxon>
        <taxon>Pentapetalae</taxon>
        <taxon>rosids</taxon>
        <taxon>malvids</taxon>
        <taxon>Brassicales</taxon>
        <taxon>Brassicaceae</taxon>
        <taxon>Camelineae</taxon>
        <taxon>Arabidopsis</taxon>
    </lineage>
</organism>
<evidence type="ECO:0000250" key="1">
    <source>
        <dbReference type="UniProtKB" id="Q9FHP6"/>
    </source>
</evidence>
<evidence type="ECO:0000250" key="2">
    <source>
        <dbReference type="UniProtKB" id="Q9LVH4"/>
    </source>
</evidence>
<evidence type="ECO:0000250" key="3">
    <source>
        <dbReference type="UniProtKB" id="Q9SSL1"/>
    </source>
</evidence>
<evidence type="ECO:0000255" key="4">
    <source>
        <dbReference type="PROSITE-ProRule" id="PRU00041"/>
    </source>
</evidence>
<evidence type="ECO:0000303" key="5">
    <source>
    </source>
</evidence>
<evidence type="ECO:0000305" key="6">
    <source>
    </source>
</evidence>
<evidence type="ECO:0000312" key="7">
    <source>
        <dbReference type="Araport" id="AT1G66360"/>
    </source>
</evidence>
<evidence type="ECO:0000312" key="8">
    <source>
        <dbReference type="EMBL" id="AAG52156.1"/>
    </source>
</evidence>
<evidence type="ECO:0000312" key="9">
    <source>
        <dbReference type="Proteomes" id="UP000006548"/>
    </source>
</evidence>
<sequence>MENMLGLLRLHVIRGVNLAIRDSQSSDPYVIVRMGKQKLRTRVMKKNLNTEWNEDLTLSVTDPTLPVKIMVYDRDRFSRDDKMGDAIFHIDPFLEAIRIQNQLGGLPEGTVIMKIQASRQNCLSEESKIVWHKGKIVQNMFLKLQNVERGEIELQLEWIDVSGALTDDAEDVAF</sequence>
<dbReference type="EMBL" id="AC020665">
    <property type="protein sequence ID" value="AAG52156.1"/>
    <property type="molecule type" value="Genomic_DNA"/>
</dbReference>
<dbReference type="EMBL" id="CP002684">
    <property type="protein sequence ID" value="AEE34500.1"/>
    <property type="molecule type" value="Genomic_DNA"/>
</dbReference>
<dbReference type="PIR" id="H96688">
    <property type="entry name" value="H96688"/>
</dbReference>
<dbReference type="RefSeq" id="NP_564873.1">
    <property type="nucleotide sequence ID" value="NM_105307.3"/>
</dbReference>
<dbReference type="SMR" id="Q9C8Y2"/>
<dbReference type="FunCoup" id="Q9C8Y2">
    <property type="interactions" value="12"/>
</dbReference>
<dbReference type="STRING" id="3702.Q9C8Y2"/>
<dbReference type="PaxDb" id="3702-AT1G66360.1"/>
<dbReference type="EnsemblPlants" id="AT1G66360.1">
    <property type="protein sequence ID" value="AT1G66360.1"/>
    <property type="gene ID" value="AT1G66360"/>
</dbReference>
<dbReference type="GeneID" id="842954"/>
<dbReference type="Gramene" id="AT1G66360.1">
    <property type="protein sequence ID" value="AT1G66360.1"/>
    <property type="gene ID" value="AT1G66360"/>
</dbReference>
<dbReference type="KEGG" id="ath:AT1G66360"/>
<dbReference type="Araport" id="AT1G66360"/>
<dbReference type="TAIR" id="AT1G66360">
    <property type="gene designation" value="CAR2"/>
</dbReference>
<dbReference type="eggNOG" id="KOG1030">
    <property type="taxonomic scope" value="Eukaryota"/>
</dbReference>
<dbReference type="HOGENOM" id="CLU_106037_0_0_1"/>
<dbReference type="InParanoid" id="Q9C8Y2"/>
<dbReference type="OMA" id="EESYIVW"/>
<dbReference type="PhylomeDB" id="Q9C8Y2"/>
<dbReference type="PRO" id="PR:Q9C8Y2"/>
<dbReference type="Proteomes" id="UP000006548">
    <property type="component" value="Chromosome 1"/>
</dbReference>
<dbReference type="ExpressionAtlas" id="Q9C8Y2">
    <property type="expression patterns" value="baseline and differential"/>
</dbReference>
<dbReference type="GO" id="GO:0005634">
    <property type="term" value="C:nucleus"/>
    <property type="evidence" value="ECO:0000250"/>
    <property type="project" value="UniProtKB"/>
</dbReference>
<dbReference type="GO" id="GO:0005886">
    <property type="term" value="C:plasma membrane"/>
    <property type="evidence" value="ECO:0000250"/>
    <property type="project" value="UniProtKB"/>
</dbReference>
<dbReference type="GO" id="GO:0005096">
    <property type="term" value="F:GTPase activator activity"/>
    <property type="evidence" value="ECO:0000250"/>
    <property type="project" value="UniProtKB"/>
</dbReference>
<dbReference type="GO" id="GO:0046872">
    <property type="term" value="F:metal ion binding"/>
    <property type="evidence" value="ECO:0007669"/>
    <property type="project" value="UniProtKB-KW"/>
</dbReference>
<dbReference type="GO" id="GO:0005543">
    <property type="term" value="F:phospholipid binding"/>
    <property type="evidence" value="ECO:0000250"/>
    <property type="project" value="UniProtKB"/>
</dbReference>
<dbReference type="GO" id="GO:0009738">
    <property type="term" value="P:abscisic acid-activated signaling pathway"/>
    <property type="evidence" value="ECO:0007669"/>
    <property type="project" value="UniProtKB-KW"/>
</dbReference>
<dbReference type="GO" id="GO:0009789">
    <property type="term" value="P:positive regulation of abscisic acid-activated signaling pathway"/>
    <property type="evidence" value="ECO:0000250"/>
    <property type="project" value="UniProtKB"/>
</dbReference>
<dbReference type="GO" id="GO:0043547">
    <property type="term" value="P:positive regulation of GTPase activity"/>
    <property type="evidence" value="ECO:0000250"/>
    <property type="project" value="UniProtKB"/>
</dbReference>
<dbReference type="CDD" id="cd04038">
    <property type="entry name" value="C2_ArfGAP"/>
    <property type="match status" value="1"/>
</dbReference>
<dbReference type="Gene3D" id="2.60.40.150">
    <property type="entry name" value="C2 domain"/>
    <property type="match status" value="1"/>
</dbReference>
<dbReference type="InterPro" id="IPR000008">
    <property type="entry name" value="C2_dom"/>
</dbReference>
<dbReference type="InterPro" id="IPR035892">
    <property type="entry name" value="C2_domain_sf"/>
</dbReference>
<dbReference type="InterPro" id="IPR044562">
    <property type="entry name" value="CAR1-11"/>
</dbReference>
<dbReference type="PANTHER" id="PTHR45933:SF23">
    <property type="entry name" value="PROTEIN C2-DOMAIN ABA-RELATED 2"/>
    <property type="match status" value="1"/>
</dbReference>
<dbReference type="PANTHER" id="PTHR45933">
    <property type="entry name" value="PROTEIN C2-DOMAIN ABA-RELATED 4"/>
    <property type="match status" value="1"/>
</dbReference>
<dbReference type="Pfam" id="PF00168">
    <property type="entry name" value="C2"/>
    <property type="match status" value="1"/>
</dbReference>
<dbReference type="SMART" id="SM00239">
    <property type="entry name" value="C2"/>
    <property type="match status" value="1"/>
</dbReference>
<dbReference type="SUPFAM" id="SSF49562">
    <property type="entry name" value="C2 domain (Calcium/lipid-binding domain, CaLB)"/>
    <property type="match status" value="1"/>
</dbReference>
<dbReference type="PROSITE" id="PS50004">
    <property type="entry name" value="C2"/>
    <property type="match status" value="1"/>
</dbReference>
<feature type="chain" id="PRO_0000433312" description="Protein C2-DOMAIN ABA-RELATED 2">
    <location>
        <begin position="1"/>
        <end position="174"/>
    </location>
</feature>
<feature type="domain" description="C2" evidence="4">
    <location>
        <begin position="1"/>
        <end position="104"/>
    </location>
</feature>
<feature type="binding site" evidence="2">
    <location>
        <position position="21"/>
    </location>
    <ligand>
        <name>Ca(2+)</name>
        <dbReference type="ChEBI" id="CHEBI:29108"/>
        <label>1</label>
    </ligand>
</feature>
<feature type="binding site" evidence="2">
    <location>
        <position position="22"/>
    </location>
    <ligand>
        <name>Ca(2+)</name>
        <dbReference type="ChEBI" id="CHEBI:29108"/>
        <label>1</label>
    </ligand>
</feature>
<feature type="binding site" evidence="2">
    <location>
        <position position="22"/>
    </location>
    <ligand>
        <name>Ca(2+)</name>
        <dbReference type="ChEBI" id="CHEBI:29108"/>
        <label>2</label>
    </ligand>
</feature>
<feature type="binding site" evidence="2">
    <location>
        <position position="27"/>
    </location>
    <ligand>
        <name>Ca(2+)</name>
        <dbReference type="ChEBI" id="CHEBI:29108"/>
        <label>2</label>
    </ligand>
</feature>
<feature type="binding site" evidence="2">
    <location>
        <position position="73"/>
    </location>
    <ligand>
        <name>Ca(2+)</name>
        <dbReference type="ChEBI" id="CHEBI:29108"/>
        <label>1</label>
    </ligand>
</feature>
<feature type="binding site" evidence="2">
    <location>
        <position position="73"/>
    </location>
    <ligand>
        <name>Ca(2+)</name>
        <dbReference type="ChEBI" id="CHEBI:29108"/>
        <label>2</label>
    </ligand>
</feature>
<feature type="binding site" evidence="2">
    <location>
        <position position="74"/>
    </location>
    <ligand>
        <name>Ca(2+)</name>
        <dbReference type="ChEBI" id="CHEBI:29108"/>
        <label>2</label>
    </ligand>
</feature>
<feature type="binding site" evidence="2">
    <location>
        <position position="75"/>
    </location>
    <ligand>
        <name>Ca(2+)</name>
        <dbReference type="ChEBI" id="CHEBI:29108"/>
        <label>1</label>
    </ligand>
</feature>
<feature type="binding site" evidence="2">
    <location>
        <position position="75"/>
    </location>
    <ligand>
        <name>Ca(2+)</name>
        <dbReference type="ChEBI" id="CHEBI:29108"/>
        <label>2</label>
    </ligand>
</feature>
<feature type="binding site" evidence="2">
    <location>
        <position position="81"/>
    </location>
    <ligand>
        <name>Ca(2+)</name>
        <dbReference type="ChEBI" id="CHEBI:29108"/>
        <label>1</label>
    </ligand>
</feature>
<feature type="modified residue" description="N-acetylmethionine" evidence="3">
    <location>
        <position position="1"/>
    </location>
</feature>
<name>CAR2_ARATH</name>
<comment type="function">
    <text evidence="1 2">Stimulates the GTPase/ATPase activities of Obg-like ATPases (By similarity). Mediates the transient calcium-dependent interaction of PYR/PYL/RCAR abscisic acid (ABA) receptors with the plasma membrane and thus regulates ABA sensitivity (By similarity).</text>
</comment>
<comment type="cofactor">
    <cofactor evidence="4">
        <name>Ca(2+)</name>
        <dbReference type="ChEBI" id="CHEBI:29108"/>
    </cofactor>
</comment>
<comment type="subunit">
    <text evidence="1">Binds to PYR/PYL/RCAR abscisic acid intracellular receptors in an ABA-independent manner, both at the plasma membrane and in the nucleus.</text>
</comment>
<comment type="subcellular location">
    <subcellularLocation>
        <location evidence="1">Cell membrane</location>
    </subcellularLocation>
    <subcellularLocation>
        <location evidence="1">Nucleus</location>
    </subcellularLocation>
</comment>
<comment type="similarity">
    <text evidence="6">Belongs to the plant CAR protein family.</text>
</comment>
<gene>
    <name evidence="5" type="primary">CAR2</name>
    <name evidence="7" type="ordered locus">At1g66360</name>
    <name evidence="8" type="ORF">T27F4.11</name>
</gene>